<name>Y1497_METJA</name>
<evidence type="ECO:0000250" key="1"/>
<evidence type="ECO:0000305" key="2"/>
<protein>
    <recommendedName>
        <fullName>Uncharacterized metallohydrolase MJ1497</fullName>
        <ecNumber>3.-.-.-</ecNumber>
    </recommendedName>
</protein>
<dbReference type="EC" id="3.-.-.-"/>
<dbReference type="EMBL" id="L77117">
    <property type="protein sequence ID" value="AAB99508.1"/>
    <property type="molecule type" value="Genomic_DNA"/>
</dbReference>
<dbReference type="PIR" id="H64486">
    <property type="entry name" value="H64486"/>
</dbReference>
<dbReference type="RefSeq" id="WP_010871020.1">
    <property type="nucleotide sequence ID" value="NC_000909.1"/>
</dbReference>
<dbReference type="SMR" id="Q58892"/>
<dbReference type="FunCoup" id="Q58892">
    <property type="interactions" value="94"/>
</dbReference>
<dbReference type="STRING" id="243232.MJ_1497"/>
<dbReference type="PaxDb" id="243232-MJ_1497"/>
<dbReference type="EnsemblBacteria" id="AAB99508">
    <property type="protein sequence ID" value="AAB99508"/>
    <property type="gene ID" value="MJ_1497"/>
</dbReference>
<dbReference type="GeneID" id="1452404"/>
<dbReference type="KEGG" id="mja:MJ_1497"/>
<dbReference type="eggNOG" id="arCOG01107">
    <property type="taxonomic scope" value="Archaea"/>
</dbReference>
<dbReference type="HOGENOM" id="CLU_800794_0_0_2"/>
<dbReference type="InParanoid" id="Q58892"/>
<dbReference type="OrthoDB" id="64254at2157"/>
<dbReference type="PhylomeDB" id="Q58892"/>
<dbReference type="Proteomes" id="UP000000805">
    <property type="component" value="Chromosome"/>
</dbReference>
<dbReference type="GO" id="GO:0016787">
    <property type="term" value="F:hydrolase activity"/>
    <property type="evidence" value="ECO:0007669"/>
    <property type="project" value="UniProtKB-KW"/>
</dbReference>
<dbReference type="GO" id="GO:0046872">
    <property type="term" value="F:metal ion binding"/>
    <property type="evidence" value="ECO:0007669"/>
    <property type="project" value="UniProtKB-KW"/>
</dbReference>
<dbReference type="CDD" id="cd08659">
    <property type="entry name" value="M20_ArgE_DapE-like"/>
    <property type="match status" value="1"/>
</dbReference>
<dbReference type="Gene3D" id="3.30.70.360">
    <property type="match status" value="1"/>
</dbReference>
<dbReference type="Gene3D" id="3.40.630.10">
    <property type="entry name" value="Zn peptidases"/>
    <property type="match status" value="1"/>
</dbReference>
<dbReference type="InterPro" id="IPR036264">
    <property type="entry name" value="Bact_exopeptidase_dim_dom"/>
</dbReference>
<dbReference type="InterPro" id="IPR002933">
    <property type="entry name" value="Peptidase_M20"/>
</dbReference>
<dbReference type="InterPro" id="IPR011650">
    <property type="entry name" value="Peptidase_M20_dimer"/>
</dbReference>
<dbReference type="InterPro" id="IPR050072">
    <property type="entry name" value="Peptidase_M20A"/>
</dbReference>
<dbReference type="PANTHER" id="PTHR43808">
    <property type="entry name" value="ACETYLORNITHINE DEACETYLASE"/>
    <property type="match status" value="1"/>
</dbReference>
<dbReference type="PANTHER" id="PTHR43808:SF8">
    <property type="entry name" value="PEPTIDASE M20 DIMERISATION DOMAIN-CONTAINING PROTEIN"/>
    <property type="match status" value="1"/>
</dbReference>
<dbReference type="Pfam" id="PF07687">
    <property type="entry name" value="M20_dimer"/>
    <property type="match status" value="1"/>
</dbReference>
<dbReference type="Pfam" id="PF01546">
    <property type="entry name" value="Peptidase_M20"/>
    <property type="match status" value="1"/>
</dbReference>
<dbReference type="SUPFAM" id="SSF55031">
    <property type="entry name" value="Bacterial exopeptidase dimerisation domain"/>
    <property type="match status" value="1"/>
</dbReference>
<dbReference type="SUPFAM" id="SSF53187">
    <property type="entry name" value="Zn-dependent exopeptidases"/>
    <property type="match status" value="1"/>
</dbReference>
<comment type="cofactor">
    <cofactor evidence="1">
        <name>Zn(2+)</name>
        <dbReference type="ChEBI" id="CHEBI:29105"/>
    </cofactor>
    <cofactor evidence="1">
        <name>Co(2+)</name>
        <dbReference type="ChEBI" id="CHEBI:48828"/>
    </cofactor>
    <text evidence="1">Binds 2 Zn(2+) or Co(2+) ions per subunit.</text>
</comment>
<comment type="similarity">
    <text evidence="2">Belongs to the peptidase M20A family.</text>
</comment>
<gene>
    <name type="ordered locus">MJ1497</name>
</gene>
<proteinExistence type="inferred from homology"/>
<accession>Q58892</accession>
<organism>
    <name type="scientific">Methanocaldococcus jannaschii (strain ATCC 43067 / DSM 2661 / JAL-1 / JCM 10045 / NBRC 100440)</name>
    <name type="common">Methanococcus jannaschii</name>
    <dbReference type="NCBI Taxonomy" id="243232"/>
    <lineage>
        <taxon>Archaea</taxon>
        <taxon>Methanobacteriati</taxon>
        <taxon>Methanobacteriota</taxon>
        <taxon>Methanomada group</taxon>
        <taxon>Methanococci</taxon>
        <taxon>Methanococcales</taxon>
        <taxon>Methanocaldococcaceae</taxon>
        <taxon>Methanocaldococcus</taxon>
    </lineage>
</organism>
<reference key="1">
    <citation type="journal article" date="1996" name="Science">
        <title>Complete genome sequence of the methanogenic archaeon, Methanococcus jannaschii.</title>
        <authorList>
            <person name="Bult C.J."/>
            <person name="White O."/>
            <person name="Olsen G.J."/>
            <person name="Zhou L."/>
            <person name="Fleischmann R.D."/>
            <person name="Sutton G.G."/>
            <person name="Blake J.A."/>
            <person name="FitzGerald L.M."/>
            <person name="Clayton R.A."/>
            <person name="Gocayne J.D."/>
            <person name="Kerlavage A.R."/>
            <person name="Dougherty B.A."/>
            <person name="Tomb J.-F."/>
            <person name="Adams M.D."/>
            <person name="Reich C.I."/>
            <person name="Overbeek R."/>
            <person name="Kirkness E.F."/>
            <person name="Weinstock K.G."/>
            <person name="Merrick J.M."/>
            <person name="Glodek A."/>
            <person name="Scott J.L."/>
            <person name="Geoghagen N.S.M."/>
            <person name="Weidman J.F."/>
            <person name="Fuhrmann J.L."/>
            <person name="Nguyen D."/>
            <person name="Utterback T.R."/>
            <person name="Kelley J.M."/>
            <person name="Peterson J.D."/>
            <person name="Sadow P.W."/>
            <person name="Hanna M.C."/>
            <person name="Cotton M.D."/>
            <person name="Roberts K.M."/>
            <person name="Hurst M.A."/>
            <person name="Kaine B.P."/>
            <person name="Borodovsky M."/>
            <person name="Klenk H.-P."/>
            <person name="Fraser C.M."/>
            <person name="Smith H.O."/>
            <person name="Woese C.R."/>
            <person name="Venter J.C."/>
        </authorList>
    </citation>
    <scope>NUCLEOTIDE SEQUENCE [LARGE SCALE GENOMIC DNA]</scope>
    <source>
        <strain>ATCC 43067 / DSM 2661 / JAL-1 / JCM 10045 / NBRC 100440</strain>
    </source>
</reference>
<keyword id="KW-0170">Cobalt</keyword>
<keyword id="KW-0378">Hydrolase</keyword>
<keyword id="KW-0479">Metal-binding</keyword>
<keyword id="KW-1185">Reference proteome</keyword>
<keyword id="KW-0862">Zinc</keyword>
<feature type="chain" id="PRO_0000185353" description="Uncharacterized metallohydrolase MJ1497">
    <location>
        <begin position="1"/>
        <end position="346"/>
    </location>
</feature>
<feature type="active site" evidence="1">
    <location>
        <position position="67"/>
    </location>
</feature>
<feature type="active site" description="Proton acceptor" evidence="1">
    <location>
        <position position="115"/>
    </location>
</feature>
<feature type="binding site" evidence="1">
    <location>
        <position position="65"/>
    </location>
    <ligand>
        <name>Zn(2+)</name>
        <dbReference type="ChEBI" id="CHEBI:29105"/>
        <label>1</label>
    </ligand>
</feature>
<feature type="binding site" evidence="1">
    <location>
        <position position="89"/>
    </location>
    <ligand>
        <name>Zn(2+)</name>
        <dbReference type="ChEBI" id="CHEBI:29105"/>
        <label>1</label>
    </ligand>
</feature>
<feature type="binding site" evidence="1">
    <location>
        <position position="89"/>
    </location>
    <ligand>
        <name>Zn(2+)</name>
        <dbReference type="ChEBI" id="CHEBI:29105"/>
        <label>2</label>
    </ligand>
</feature>
<feature type="binding site" evidence="1">
    <location>
        <position position="116"/>
    </location>
    <ligand>
        <name>Zn(2+)</name>
        <dbReference type="ChEBI" id="CHEBI:29105"/>
        <label>2</label>
    </ligand>
</feature>
<feature type="binding site" evidence="1">
    <location>
        <position position="145"/>
    </location>
    <ligand>
        <name>Zn(2+)</name>
        <dbReference type="ChEBI" id="CHEBI:29105"/>
        <label>1</label>
    </ligand>
</feature>
<feature type="binding site" evidence="1">
    <location>
        <position position="319"/>
    </location>
    <ligand>
        <name>Zn(2+)</name>
        <dbReference type="ChEBI" id="CHEBI:29105"/>
        <label>2</label>
    </ligand>
</feature>
<sequence length="346" mass="39800">MIIMDYLKILEDLVKIRTDNRIGVKKAFKYLSNLFNNLGIKNTIIEGCFVAYKEKENFDLILNSHIDTVKIQSNFKKDDNNFYGTGVIDAKGNVVLMIHAFLNSNNSLLVISPDEETESNGIYNFCQYLRNKNKIQRGIKCIVGEPTDLNVCIGHKGRFEYIVESFGEARHASSQGLNPIEILSRVILDLKNLPLEKIKVDKIYSSSITPTIIKGGIQSNIIPDYAYVLFDVRSVEKDIIKKIDDFLSQKNYSKHIKSSLNPERHYANFYMLENKELINKLSKHFKISFFNATCEAYYFNKFLKADTIIYGVGKLELAHSKEEYLNLNDFDRGIKEVEKLAELMIE</sequence>